<organism>
    <name type="scientific">Shewanella oneidensis (strain ATCC 700550 / JCM 31522 / CIP 106686 / LMG 19005 / NCIMB 14063 / MR-1)</name>
    <dbReference type="NCBI Taxonomy" id="211586"/>
    <lineage>
        <taxon>Bacteria</taxon>
        <taxon>Pseudomonadati</taxon>
        <taxon>Pseudomonadota</taxon>
        <taxon>Gammaproteobacteria</taxon>
        <taxon>Alteromonadales</taxon>
        <taxon>Shewanellaceae</taxon>
        <taxon>Shewanella</taxon>
    </lineage>
</organism>
<protein>
    <recommendedName>
        <fullName evidence="1">Aspartate/glutamate leucyltransferase</fullName>
        <ecNumber evidence="1">2.3.2.29</ecNumber>
    </recommendedName>
</protein>
<evidence type="ECO:0000255" key="1">
    <source>
        <dbReference type="HAMAP-Rule" id="MF_00689"/>
    </source>
</evidence>
<proteinExistence type="inferred from homology"/>
<sequence length="238" mass="27904">MNSNANNTPIAIGISQVFPCSYLDGQQEQLLVIQEETLDPILFERLLAIGFRRSGSAIYKPRCPRCSACQPIRVPIQEFVPSKRQKRTLAHNRDLTWRITTEHTETQYALYEKYIRERHFDGPMYPPSKAQYEQFLFCHWLPPTFIEVYDDNRLVAVAVTDTLPNSFSAIYSYFDPDEERRSLGVLLILLQCRLAKLQGKAFLYLGYQIDANRKMSYKRLYRPYQILTHQGWEYSQVC</sequence>
<accession>Q8EDW7</accession>
<dbReference type="EC" id="2.3.2.29" evidence="1"/>
<dbReference type="EMBL" id="AE014299">
    <property type="protein sequence ID" value="AAN55653.1"/>
    <property type="molecule type" value="Genomic_DNA"/>
</dbReference>
<dbReference type="RefSeq" id="NP_718209.1">
    <property type="nucleotide sequence ID" value="NC_004347.2"/>
</dbReference>
<dbReference type="RefSeq" id="WP_011072573.1">
    <property type="nucleotide sequence ID" value="NC_004347.2"/>
</dbReference>
<dbReference type="SMR" id="Q8EDW7"/>
<dbReference type="STRING" id="211586.SO_2624"/>
<dbReference type="PaxDb" id="211586-SO_2624"/>
<dbReference type="KEGG" id="son:SO_2624"/>
<dbReference type="PATRIC" id="fig|211586.12.peg.2527"/>
<dbReference type="eggNOG" id="COG2935">
    <property type="taxonomic scope" value="Bacteria"/>
</dbReference>
<dbReference type="HOGENOM" id="CLU_077607_0_0_6"/>
<dbReference type="OrthoDB" id="9782022at2"/>
<dbReference type="PhylomeDB" id="Q8EDW7"/>
<dbReference type="BioCyc" id="SONE211586:G1GMP-2410-MONOMER"/>
<dbReference type="Proteomes" id="UP000008186">
    <property type="component" value="Chromosome"/>
</dbReference>
<dbReference type="GO" id="GO:0005737">
    <property type="term" value="C:cytoplasm"/>
    <property type="evidence" value="ECO:0000318"/>
    <property type="project" value="GO_Central"/>
</dbReference>
<dbReference type="GO" id="GO:0004057">
    <property type="term" value="F:arginyl-tRNA--protein transferase activity"/>
    <property type="evidence" value="ECO:0000318"/>
    <property type="project" value="GO_Central"/>
</dbReference>
<dbReference type="GO" id="GO:0008914">
    <property type="term" value="F:leucyl-tRNA--protein transferase activity"/>
    <property type="evidence" value="ECO:0007669"/>
    <property type="project" value="UniProtKB-UniRule"/>
</dbReference>
<dbReference type="GO" id="GO:0010498">
    <property type="term" value="P:proteasomal protein catabolic process"/>
    <property type="evidence" value="ECO:0000318"/>
    <property type="project" value="GO_Central"/>
</dbReference>
<dbReference type="GO" id="GO:0071596">
    <property type="term" value="P:ubiquitin-dependent protein catabolic process via the N-end rule pathway"/>
    <property type="evidence" value="ECO:0007669"/>
    <property type="project" value="InterPro"/>
</dbReference>
<dbReference type="HAMAP" id="MF_00689">
    <property type="entry name" value="Bpt"/>
    <property type="match status" value="1"/>
</dbReference>
<dbReference type="InterPro" id="IPR016181">
    <property type="entry name" value="Acyl_CoA_acyltransferase"/>
</dbReference>
<dbReference type="InterPro" id="IPR017138">
    <property type="entry name" value="Asp_Glu_LeuTrfase"/>
</dbReference>
<dbReference type="InterPro" id="IPR030700">
    <property type="entry name" value="N-end_Aminoacyl_Trfase"/>
</dbReference>
<dbReference type="InterPro" id="IPR007472">
    <property type="entry name" value="N-end_Aminoacyl_Trfase_C"/>
</dbReference>
<dbReference type="InterPro" id="IPR007471">
    <property type="entry name" value="N-end_Aminoacyl_Trfase_N"/>
</dbReference>
<dbReference type="NCBIfam" id="NF002342">
    <property type="entry name" value="PRK01305.1-3"/>
    <property type="match status" value="1"/>
</dbReference>
<dbReference type="NCBIfam" id="NF002345">
    <property type="entry name" value="PRK01305.2-2"/>
    <property type="match status" value="1"/>
</dbReference>
<dbReference type="NCBIfam" id="NF002346">
    <property type="entry name" value="PRK01305.2-3"/>
    <property type="match status" value="1"/>
</dbReference>
<dbReference type="NCBIfam" id="NF002347">
    <property type="entry name" value="PRK01305.2-4"/>
    <property type="match status" value="1"/>
</dbReference>
<dbReference type="PANTHER" id="PTHR21367">
    <property type="entry name" value="ARGININE-TRNA-PROTEIN TRANSFERASE 1"/>
    <property type="match status" value="1"/>
</dbReference>
<dbReference type="PANTHER" id="PTHR21367:SF1">
    <property type="entry name" value="ARGINYL-TRNA--PROTEIN TRANSFERASE 1"/>
    <property type="match status" value="1"/>
</dbReference>
<dbReference type="Pfam" id="PF04377">
    <property type="entry name" value="ATE_C"/>
    <property type="match status" value="1"/>
</dbReference>
<dbReference type="Pfam" id="PF04376">
    <property type="entry name" value="ATE_N"/>
    <property type="match status" value="1"/>
</dbReference>
<dbReference type="PIRSF" id="PIRSF037208">
    <property type="entry name" value="ATE_pro_prd"/>
    <property type="match status" value="1"/>
</dbReference>
<dbReference type="SUPFAM" id="SSF55729">
    <property type="entry name" value="Acyl-CoA N-acyltransferases (Nat)"/>
    <property type="match status" value="1"/>
</dbReference>
<comment type="function">
    <text evidence="1">Functions in the N-end rule pathway of protein degradation where it conjugates Leu from its aminoacyl-tRNA to the N-termini of proteins containing an N-terminal aspartate or glutamate.</text>
</comment>
<comment type="catalytic activity">
    <reaction evidence="1">
        <text>N-terminal L-glutamyl-[protein] + L-leucyl-tRNA(Leu) = N-terminal L-leucyl-L-glutamyl-[protein] + tRNA(Leu) + H(+)</text>
        <dbReference type="Rhea" id="RHEA:50412"/>
        <dbReference type="Rhea" id="RHEA-COMP:9613"/>
        <dbReference type="Rhea" id="RHEA-COMP:9622"/>
        <dbReference type="Rhea" id="RHEA-COMP:12664"/>
        <dbReference type="Rhea" id="RHEA-COMP:12668"/>
        <dbReference type="ChEBI" id="CHEBI:15378"/>
        <dbReference type="ChEBI" id="CHEBI:64721"/>
        <dbReference type="ChEBI" id="CHEBI:78442"/>
        <dbReference type="ChEBI" id="CHEBI:78494"/>
        <dbReference type="ChEBI" id="CHEBI:133041"/>
        <dbReference type="EC" id="2.3.2.29"/>
    </reaction>
</comment>
<comment type="catalytic activity">
    <reaction evidence="1">
        <text>N-terminal L-aspartyl-[protein] + L-leucyl-tRNA(Leu) = N-terminal L-leucyl-L-aspartyl-[protein] + tRNA(Leu) + H(+)</text>
        <dbReference type="Rhea" id="RHEA:50420"/>
        <dbReference type="Rhea" id="RHEA-COMP:9613"/>
        <dbReference type="Rhea" id="RHEA-COMP:9622"/>
        <dbReference type="Rhea" id="RHEA-COMP:12669"/>
        <dbReference type="Rhea" id="RHEA-COMP:12674"/>
        <dbReference type="ChEBI" id="CHEBI:15378"/>
        <dbReference type="ChEBI" id="CHEBI:64720"/>
        <dbReference type="ChEBI" id="CHEBI:78442"/>
        <dbReference type="ChEBI" id="CHEBI:78494"/>
        <dbReference type="ChEBI" id="CHEBI:133042"/>
        <dbReference type="EC" id="2.3.2.29"/>
    </reaction>
</comment>
<comment type="subcellular location">
    <subcellularLocation>
        <location evidence="1">Cytoplasm</location>
    </subcellularLocation>
</comment>
<comment type="similarity">
    <text evidence="1">Belongs to the R-transferase family. Bpt subfamily.</text>
</comment>
<keyword id="KW-0012">Acyltransferase</keyword>
<keyword id="KW-0963">Cytoplasm</keyword>
<keyword id="KW-1185">Reference proteome</keyword>
<keyword id="KW-0808">Transferase</keyword>
<name>BPT_SHEON</name>
<feature type="chain" id="PRO_0000195115" description="Aspartate/glutamate leucyltransferase">
    <location>
        <begin position="1"/>
        <end position="238"/>
    </location>
</feature>
<reference key="1">
    <citation type="journal article" date="2002" name="Nat. Biotechnol.">
        <title>Genome sequence of the dissimilatory metal ion-reducing bacterium Shewanella oneidensis.</title>
        <authorList>
            <person name="Heidelberg J.F."/>
            <person name="Paulsen I.T."/>
            <person name="Nelson K.E."/>
            <person name="Gaidos E.J."/>
            <person name="Nelson W.C."/>
            <person name="Read T.D."/>
            <person name="Eisen J.A."/>
            <person name="Seshadri R."/>
            <person name="Ward N.L."/>
            <person name="Methe B.A."/>
            <person name="Clayton R.A."/>
            <person name="Meyer T."/>
            <person name="Tsapin A."/>
            <person name="Scott J."/>
            <person name="Beanan M.J."/>
            <person name="Brinkac L.M."/>
            <person name="Daugherty S.C."/>
            <person name="DeBoy R.T."/>
            <person name="Dodson R.J."/>
            <person name="Durkin A.S."/>
            <person name="Haft D.H."/>
            <person name="Kolonay J.F."/>
            <person name="Madupu R."/>
            <person name="Peterson J.D."/>
            <person name="Umayam L.A."/>
            <person name="White O."/>
            <person name="Wolf A.M."/>
            <person name="Vamathevan J.J."/>
            <person name="Weidman J.F."/>
            <person name="Impraim M."/>
            <person name="Lee K."/>
            <person name="Berry K.J."/>
            <person name="Lee C."/>
            <person name="Mueller J."/>
            <person name="Khouri H.M."/>
            <person name="Gill J."/>
            <person name="Utterback T.R."/>
            <person name="McDonald L.A."/>
            <person name="Feldblyum T.V."/>
            <person name="Smith H.O."/>
            <person name="Venter J.C."/>
            <person name="Nealson K.H."/>
            <person name="Fraser C.M."/>
        </authorList>
    </citation>
    <scope>NUCLEOTIDE SEQUENCE [LARGE SCALE GENOMIC DNA]</scope>
    <source>
        <strain>ATCC 700550 / JCM 31522 / CIP 106686 / LMG 19005 / NCIMB 14063 / MR-1</strain>
    </source>
</reference>
<gene>
    <name evidence="1" type="primary">bpt</name>
    <name type="ordered locus">SO_2624</name>
</gene>